<gene>
    <name type="primary">thsB</name>
    <name type="ordered locus">AF_1451</name>
</gene>
<feature type="chain" id="PRO_0000128382" description="Thermosome subunit beta">
    <location>
        <begin position="1"/>
        <end position="545"/>
    </location>
</feature>
<reference key="1">
    <citation type="journal article" date="1997" name="Nature">
        <title>The complete genome sequence of the hyperthermophilic, sulphate-reducing archaeon Archaeoglobus fulgidus.</title>
        <authorList>
            <person name="Klenk H.-P."/>
            <person name="Clayton R.A."/>
            <person name="Tomb J.-F."/>
            <person name="White O."/>
            <person name="Nelson K.E."/>
            <person name="Ketchum K.A."/>
            <person name="Dodson R.J."/>
            <person name="Gwinn M.L."/>
            <person name="Hickey E.K."/>
            <person name="Peterson J.D."/>
            <person name="Richardson D.L."/>
            <person name="Kerlavage A.R."/>
            <person name="Graham D.E."/>
            <person name="Kyrpides N.C."/>
            <person name="Fleischmann R.D."/>
            <person name="Quackenbush J."/>
            <person name="Lee N.H."/>
            <person name="Sutton G.G."/>
            <person name="Gill S.R."/>
            <person name="Kirkness E.F."/>
            <person name="Dougherty B.A."/>
            <person name="McKenney K."/>
            <person name="Adams M.D."/>
            <person name="Loftus B.J."/>
            <person name="Peterson S.N."/>
            <person name="Reich C.I."/>
            <person name="McNeil L.K."/>
            <person name="Badger J.H."/>
            <person name="Glodek A."/>
            <person name="Zhou L."/>
            <person name="Overbeek R."/>
            <person name="Gocayne J.D."/>
            <person name="Weidman J.F."/>
            <person name="McDonald L.A."/>
            <person name="Utterback T.R."/>
            <person name="Cotton M.D."/>
            <person name="Spriggs T."/>
            <person name="Artiach P."/>
            <person name="Kaine B.P."/>
            <person name="Sykes S.M."/>
            <person name="Sadow P.W."/>
            <person name="D'Andrea K.P."/>
            <person name="Bowman C."/>
            <person name="Fujii C."/>
            <person name="Garland S.A."/>
            <person name="Mason T.M."/>
            <person name="Olsen G.J."/>
            <person name="Fraser C.M."/>
            <person name="Smith H.O."/>
            <person name="Woese C.R."/>
            <person name="Venter J.C."/>
        </authorList>
    </citation>
    <scope>NUCLEOTIDE SEQUENCE [LARGE SCALE GENOMIC DNA]</scope>
    <source>
        <strain>ATCC 49558 / DSM 4304 / JCM 9628 / NBRC 100126 / VC-16</strain>
    </source>
</reference>
<reference key="2">
    <citation type="submission" date="1998-01" db="EMBL/GenBank/DDBJ databases">
        <authorList>
            <person name="Emmerhoff O.J."/>
            <person name="Birkeland N.-K."/>
        </authorList>
    </citation>
    <scope>NUCLEOTIDE SEQUENCE [GENOMIC DNA]</scope>
    <source>
        <strain>ATCC 49558 / DSM 4304 / JCM 9628 / NBRC 100126 / VC-16</strain>
    </source>
</reference>
<sequence>MATLQGQPVLILREGTQRTVGRDAQRMNIMAARVIAEAVRSTLGPKGMDKMLVDSLGDVVITNDGVTILKEIDVEHPAAKMIIEVAKTQDNEVGDGTTTAVVLAGELLKRAEELLDQEIHPAIIANGYRYAAEKALEILNEIAIPISKDDDEILKKIATTAMTGKGAEVAIDKLAEIAVNAVKMIAEESNGQVEVNTDYIKIEKRQGGSIEETELVDGIVLDKEVVHPGMPKRVENAKILLLDSALEVKETEIDAKIRITDPEKLQKFIEQEEAMLKEMVDKIVNAGANVVFCQKGIDDLAQYYLAKAGVLAVRRVKKSDMEKLAKATGAKVLTDLRDISSEDLGEAALVEERKVGDEKMVFVTGCKNPKAVTILVRGGTEHVVEEIARGIEDAVRAVACAVEDGKVVVGAGAPEIEVSLKLREWAPSLGGREQLAVEAFATALEIIPRTLAENAGLDPIDVLVELKAAHEKGQKYAGVDVDTGKVVDMKERGVFEPLRVKTQAIGSATEVAVMILRIDDIIAAKGLEKEKGGGGEGGMPEMPEF</sequence>
<accession>O28821</accession>
<evidence type="ECO:0000250" key="1"/>
<evidence type="ECO:0000305" key="2"/>
<comment type="function">
    <text evidence="1">Molecular chaperone; binds unfolded polypeptides in vitro, and has a weak ATPase activity.</text>
</comment>
<comment type="subunit">
    <text evidence="1">Forms a Heterooligomeric complex of two stacked eight-membered rings.</text>
</comment>
<comment type="similarity">
    <text evidence="2">Belongs to the TCP-1 chaperonin family.</text>
</comment>
<keyword id="KW-0067">ATP-binding</keyword>
<keyword id="KW-0143">Chaperone</keyword>
<keyword id="KW-0547">Nucleotide-binding</keyword>
<keyword id="KW-1185">Reference proteome</keyword>
<dbReference type="EMBL" id="AE000782">
    <property type="protein sequence ID" value="AAB89798.1"/>
    <property type="molecule type" value="Genomic_DNA"/>
</dbReference>
<dbReference type="PIR" id="B69431">
    <property type="entry name" value="B69431"/>
</dbReference>
<dbReference type="RefSeq" id="WP_010878948.1">
    <property type="nucleotide sequence ID" value="NC_000917.1"/>
</dbReference>
<dbReference type="SMR" id="O28821"/>
<dbReference type="STRING" id="224325.AF_1451"/>
<dbReference type="PaxDb" id="224325-AF_1451"/>
<dbReference type="EnsemblBacteria" id="AAB89798">
    <property type="protein sequence ID" value="AAB89798"/>
    <property type="gene ID" value="AF_1451"/>
</dbReference>
<dbReference type="GeneID" id="24795063"/>
<dbReference type="KEGG" id="afu:AF_1451"/>
<dbReference type="eggNOG" id="arCOG01257">
    <property type="taxonomic scope" value="Archaea"/>
</dbReference>
<dbReference type="HOGENOM" id="CLU_008891_7_3_2"/>
<dbReference type="OrthoDB" id="9362at2157"/>
<dbReference type="PhylomeDB" id="O28821"/>
<dbReference type="Proteomes" id="UP000002199">
    <property type="component" value="Chromosome"/>
</dbReference>
<dbReference type="GO" id="GO:0005524">
    <property type="term" value="F:ATP binding"/>
    <property type="evidence" value="ECO:0007669"/>
    <property type="project" value="UniProtKB-KW"/>
</dbReference>
<dbReference type="GO" id="GO:0016887">
    <property type="term" value="F:ATP hydrolysis activity"/>
    <property type="evidence" value="ECO:0007669"/>
    <property type="project" value="InterPro"/>
</dbReference>
<dbReference type="GO" id="GO:0140662">
    <property type="term" value="F:ATP-dependent protein folding chaperone"/>
    <property type="evidence" value="ECO:0007669"/>
    <property type="project" value="InterPro"/>
</dbReference>
<dbReference type="GO" id="GO:0051082">
    <property type="term" value="F:unfolded protein binding"/>
    <property type="evidence" value="ECO:0007669"/>
    <property type="project" value="InterPro"/>
</dbReference>
<dbReference type="CDD" id="cd03343">
    <property type="entry name" value="cpn60"/>
    <property type="match status" value="1"/>
</dbReference>
<dbReference type="FunFam" id="1.10.560.10:FF:000017">
    <property type="entry name" value="T-complex protein 1 subunit eta"/>
    <property type="match status" value="1"/>
</dbReference>
<dbReference type="Gene3D" id="3.50.7.10">
    <property type="entry name" value="GroEL"/>
    <property type="match status" value="1"/>
</dbReference>
<dbReference type="Gene3D" id="1.10.560.10">
    <property type="entry name" value="GroEL-like equatorial domain"/>
    <property type="match status" value="1"/>
</dbReference>
<dbReference type="Gene3D" id="3.30.260.10">
    <property type="entry name" value="TCP-1-like chaperonin intermediate domain"/>
    <property type="match status" value="1"/>
</dbReference>
<dbReference type="InterPro" id="IPR017998">
    <property type="entry name" value="Chaperone_TCP-1"/>
</dbReference>
<dbReference type="InterPro" id="IPR002194">
    <property type="entry name" value="Chaperonin_TCP-1_CS"/>
</dbReference>
<dbReference type="InterPro" id="IPR002423">
    <property type="entry name" value="Cpn60/GroEL/TCP-1"/>
</dbReference>
<dbReference type="InterPro" id="IPR027409">
    <property type="entry name" value="GroEL-like_apical_dom_sf"/>
</dbReference>
<dbReference type="InterPro" id="IPR027413">
    <property type="entry name" value="GROEL-like_equatorial_sf"/>
</dbReference>
<dbReference type="InterPro" id="IPR027410">
    <property type="entry name" value="TCP-1-like_intermed_sf"/>
</dbReference>
<dbReference type="InterPro" id="IPR053374">
    <property type="entry name" value="TCP-1_chaperonin"/>
</dbReference>
<dbReference type="InterPro" id="IPR054827">
    <property type="entry name" value="thermosome_alpha"/>
</dbReference>
<dbReference type="InterPro" id="IPR012714">
    <property type="entry name" value="Thermosome_arc"/>
</dbReference>
<dbReference type="NCBIfam" id="NF041082">
    <property type="entry name" value="thermosome_alpha"/>
    <property type="match status" value="1"/>
</dbReference>
<dbReference type="NCBIfam" id="TIGR02339">
    <property type="entry name" value="thermosome_arch"/>
    <property type="match status" value="1"/>
</dbReference>
<dbReference type="NCBIfam" id="NF041083">
    <property type="entry name" value="thermosome_beta"/>
    <property type="match status" value="1"/>
</dbReference>
<dbReference type="PANTHER" id="PTHR11353">
    <property type="entry name" value="CHAPERONIN"/>
    <property type="match status" value="1"/>
</dbReference>
<dbReference type="Pfam" id="PF00118">
    <property type="entry name" value="Cpn60_TCP1"/>
    <property type="match status" value="1"/>
</dbReference>
<dbReference type="PRINTS" id="PR00304">
    <property type="entry name" value="TCOMPLEXTCP1"/>
</dbReference>
<dbReference type="SUPFAM" id="SSF52029">
    <property type="entry name" value="GroEL apical domain-like"/>
    <property type="match status" value="1"/>
</dbReference>
<dbReference type="SUPFAM" id="SSF48592">
    <property type="entry name" value="GroEL equatorial domain-like"/>
    <property type="match status" value="1"/>
</dbReference>
<dbReference type="SUPFAM" id="SSF54849">
    <property type="entry name" value="GroEL-intermediate domain like"/>
    <property type="match status" value="1"/>
</dbReference>
<dbReference type="PROSITE" id="PS00750">
    <property type="entry name" value="TCP1_1"/>
    <property type="match status" value="1"/>
</dbReference>
<dbReference type="PROSITE" id="PS00751">
    <property type="entry name" value="TCP1_2"/>
    <property type="match status" value="1"/>
</dbReference>
<dbReference type="PROSITE" id="PS00995">
    <property type="entry name" value="TCP1_3"/>
    <property type="match status" value="1"/>
</dbReference>
<protein>
    <recommendedName>
        <fullName>Thermosome subunit beta</fullName>
    </recommendedName>
    <alternativeName>
        <fullName>Chaperonin subunit beta</fullName>
    </alternativeName>
    <alternativeName>
        <fullName>Thermosome subunit 2</fullName>
    </alternativeName>
</protein>
<name>THSB_ARCFU</name>
<organism>
    <name type="scientific">Archaeoglobus fulgidus (strain ATCC 49558 / DSM 4304 / JCM 9628 / NBRC 100126 / VC-16)</name>
    <dbReference type="NCBI Taxonomy" id="224325"/>
    <lineage>
        <taxon>Archaea</taxon>
        <taxon>Methanobacteriati</taxon>
        <taxon>Methanobacteriota</taxon>
        <taxon>Archaeoglobi</taxon>
        <taxon>Archaeoglobales</taxon>
        <taxon>Archaeoglobaceae</taxon>
        <taxon>Archaeoglobus</taxon>
    </lineage>
</organism>
<proteinExistence type="inferred from homology"/>